<name>UREG1_BRUO2</name>
<proteinExistence type="inferred from homology"/>
<feature type="chain" id="PRO_0000347362" description="Urease accessory protein UreG 1">
    <location>
        <begin position="1"/>
        <end position="208"/>
    </location>
</feature>
<feature type="binding site" evidence="1">
    <location>
        <begin position="14"/>
        <end position="21"/>
    </location>
    <ligand>
        <name>GTP</name>
        <dbReference type="ChEBI" id="CHEBI:37565"/>
    </ligand>
</feature>
<gene>
    <name evidence="1" type="primary">ureG1</name>
    <name type="ordered locus">BOV_0287</name>
</gene>
<evidence type="ECO:0000255" key="1">
    <source>
        <dbReference type="HAMAP-Rule" id="MF_01389"/>
    </source>
</evidence>
<sequence>MTQKNGPLRVGIGGPVGSGKTTLTEKLCKAMRDKYSVAIITNDIYTQEDALILARRQALSEDRIIGVETGGCPHTAIREDASINLQAVVEMTRRFPDLDVVFIESGGDNLAATFSPDLADLTLYVISVCQGEEIPRKGGPGITRSDFLVINKSDLAPYVHVDLEVMEADAMRMRAKRPFGFTDLHRGKGVQEIIDFIVENGGLEPRSN</sequence>
<dbReference type="EMBL" id="CP000708">
    <property type="protein sequence ID" value="ABQ60534.1"/>
    <property type="molecule type" value="Genomic_DNA"/>
</dbReference>
<dbReference type="RefSeq" id="WP_005978085.1">
    <property type="nucleotide sequence ID" value="NC_009505.1"/>
</dbReference>
<dbReference type="SMR" id="A5VNL6"/>
<dbReference type="GeneID" id="45123779"/>
<dbReference type="KEGG" id="bov:BOV_0287"/>
<dbReference type="HOGENOM" id="CLU_072144_1_0_5"/>
<dbReference type="PhylomeDB" id="A5VNL6"/>
<dbReference type="Proteomes" id="UP000006383">
    <property type="component" value="Chromosome I"/>
</dbReference>
<dbReference type="GO" id="GO:0005737">
    <property type="term" value="C:cytoplasm"/>
    <property type="evidence" value="ECO:0007669"/>
    <property type="project" value="UniProtKB-SubCell"/>
</dbReference>
<dbReference type="GO" id="GO:0005525">
    <property type="term" value="F:GTP binding"/>
    <property type="evidence" value="ECO:0007669"/>
    <property type="project" value="UniProtKB-KW"/>
</dbReference>
<dbReference type="GO" id="GO:0003924">
    <property type="term" value="F:GTPase activity"/>
    <property type="evidence" value="ECO:0007669"/>
    <property type="project" value="InterPro"/>
</dbReference>
<dbReference type="GO" id="GO:0016151">
    <property type="term" value="F:nickel cation binding"/>
    <property type="evidence" value="ECO:0007669"/>
    <property type="project" value="UniProtKB-UniRule"/>
</dbReference>
<dbReference type="GO" id="GO:0043419">
    <property type="term" value="P:urea catabolic process"/>
    <property type="evidence" value="ECO:0007669"/>
    <property type="project" value="InterPro"/>
</dbReference>
<dbReference type="CDD" id="cd05540">
    <property type="entry name" value="UreG"/>
    <property type="match status" value="1"/>
</dbReference>
<dbReference type="FunFam" id="3.40.50.300:FF:000208">
    <property type="entry name" value="Urease accessory protein UreG"/>
    <property type="match status" value="1"/>
</dbReference>
<dbReference type="Gene3D" id="3.40.50.300">
    <property type="entry name" value="P-loop containing nucleotide triphosphate hydrolases"/>
    <property type="match status" value="1"/>
</dbReference>
<dbReference type="HAMAP" id="MF_01389">
    <property type="entry name" value="UreG"/>
    <property type="match status" value="1"/>
</dbReference>
<dbReference type="InterPro" id="IPR003495">
    <property type="entry name" value="CobW/HypB/UreG_nucleotide-bd"/>
</dbReference>
<dbReference type="InterPro" id="IPR027417">
    <property type="entry name" value="P-loop_NTPase"/>
</dbReference>
<dbReference type="InterPro" id="IPR004400">
    <property type="entry name" value="UreG"/>
</dbReference>
<dbReference type="NCBIfam" id="TIGR00101">
    <property type="entry name" value="ureG"/>
    <property type="match status" value="1"/>
</dbReference>
<dbReference type="PANTHER" id="PTHR31715">
    <property type="entry name" value="UREASE ACCESSORY PROTEIN G"/>
    <property type="match status" value="1"/>
</dbReference>
<dbReference type="PANTHER" id="PTHR31715:SF0">
    <property type="entry name" value="UREASE ACCESSORY PROTEIN G"/>
    <property type="match status" value="1"/>
</dbReference>
<dbReference type="Pfam" id="PF02492">
    <property type="entry name" value="cobW"/>
    <property type="match status" value="1"/>
</dbReference>
<dbReference type="PIRSF" id="PIRSF005624">
    <property type="entry name" value="Ni-bind_GTPase"/>
    <property type="match status" value="1"/>
</dbReference>
<dbReference type="SUPFAM" id="SSF52540">
    <property type="entry name" value="P-loop containing nucleoside triphosphate hydrolases"/>
    <property type="match status" value="1"/>
</dbReference>
<reference key="1">
    <citation type="journal article" date="2009" name="PLoS ONE">
        <title>Genome degradation in Brucella ovis corresponds with narrowing of its host range and tissue tropism.</title>
        <authorList>
            <person name="Tsolis R.M."/>
            <person name="Seshadri R."/>
            <person name="Santos R.L."/>
            <person name="Sangari F.J."/>
            <person name="Lobo J.M."/>
            <person name="de Jong M.F."/>
            <person name="Ren Q."/>
            <person name="Myers G."/>
            <person name="Brinkac L.M."/>
            <person name="Nelson W.C."/>
            <person name="Deboy R.T."/>
            <person name="Angiuoli S."/>
            <person name="Khouri H."/>
            <person name="Dimitrov G."/>
            <person name="Robinson J.R."/>
            <person name="Mulligan S."/>
            <person name="Walker R.L."/>
            <person name="Elzer P.E."/>
            <person name="Hassan K.A."/>
            <person name="Paulsen I.T."/>
        </authorList>
    </citation>
    <scope>NUCLEOTIDE SEQUENCE [LARGE SCALE GENOMIC DNA]</scope>
    <source>
        <strain>ATCC 25840 / 63/290 / NCTC 10512</strain>
    </source>
</reference>
<accession>A5VNL6</accession>
<protein>
    <recommendedName>
        <fullName evidence="1">Urease accessory protein UreG 1</fullName>
    </recommendedName>
</protein>
<comment type="function">
    <text evidence="1">Facilitates the functional incorporation of the urease nickel metallocenter. This process requires GTP hydrolysis, probably effectuated by UreG.</text>
</comment>
<comment type="subunit">
    <text evidence="1">Homodimer. UreD, UreF and UreG form a complex that acts as a GTP-hydrolysis-dependent molecular chaperone, activating the urease apoprotein by helping to assemble the nickel containing metallocenter of UreC. The UreE protein probably delivers the nickel.</text>
</comment>
<comment type="subcellular location">
    <subcellularLocation>
        <location evidence="1">Cytoplasm</location>
    </subcellularLocation>
</comment>
<comment type="similarity">
    <text evidence="1">Belongs to the SIMIBI class G3E GTPase family. UreG subfamily.</text>
</comment>
<keyword id="KW-0143">Chaperone</keyword>
<keyword id="KW-0963">Cytoplasm</keyword>
<keyword id="KW-0342">GTP-binding</keyword>
<keyword id="KW-0996">Nickel insertion</keyword>
<keyword id="KW-0547">Nucleotide-binding</keyword>
<organism>
    <name type="scientific">Brucella ovis (strain ATCC 25840 / 63/290 / NCTC 10512)</name>
    <dbReference type="NCBI Taxonomy" id="444178"/>
    <lineage>
        <taxon>Bacteria</taxon>
        <taxon>Pseudomonadati</taxon>
        <taxon>Pseudomonadota</taxon>
        <taxon>Alphaproteobacteria</taxon>
        <taxon>Hyphomicrobiales</taxon>
        <taxon>Brucellaceae</taxon>
        <taxon>Brucella/Ochrobactrum group</taxon>
        <taxon>Brucella</taxon>
    </lineage>
</organism>